<gene>
    <name evidence="1" type="primary">selA</name>
    <name type="ordered locus">CJJ81176_1380</name>
</gene>
<keyword id="KW-0963">Cytoplasm</keyword>
<keyword id="KW-0648">Protein biosynthesis</keyword>
<keyword id="KW-0663">Pyridoxal phosphate</keyword>
<keyword id="KW-0711">Selenium</keyword>
<keyword id="KW-0808">Transferase</keyword>
<dbReference type="EC" id="2.9.1.1" evidence="1"/>
<dbReference type="EMBL" id="CP000538">
    <property type="protein sequence ID" value="EAQ72930.1"/>
    <property type="molecule type" value="Genomic_DNA"/>
</dbReference>
<dbReference type="RefSeq" id="WP_002858009.1">
    <property type="nucleotide sequence ID" value="NC_008787.1"/>
</dbReference>
<dbReference type="SMR" id="A1W0Z5"/>
<dbReference type="KEGG" id="cjj:CJJ81176_1380"/>
<dbReference type="eggNOG" id="COG1921">
    <property type="taxonomic scope" value="Bacteria"/>
</dbReference>
<dbReference type="HOGENOM" id="CLU_038142_1_0_7"/>
<dbReference type="UniPathway" id="UPA00906">
    <property type="reaction ID" value="UER00896"/>
</dbReference>
<dbReference type="Proteomes" id="UP000000646">
    <property type="component" value="Chromosome"/>
</dbReference>
<dbReference type="GO" id="GO:0005737">
    <property type="term" value="C:cytoplasm"/>
    <property type="evidence" value="ECO:0007669"/>
    <property type="project" value="UniProtKB-SubCell"/>
</dbReference>
<dbReference type="GO" id="GO:0004125">
    <property type="term" value="F:L-seryl-tRNA(Sec) selenium transferase activity"/>
    <property type="evidence" value="ECO:0007669"/>
    <property type="project" value="UniProtKB-UniRule"/>
</dbReference>
<dbReference type="GO" id="GO:0001717">
    <property type="term" value="P:conversion of seryl-tRNAsec to selenocys-tRNAsec"/>
    <property type="evidence" value="ECO:0007669"/>
    <property type="project" value="UniProtKB-UniRule"/>
</dbReference>
<dbReference type="GO" id="GO:0001514">
    <property type="term" value="P:selenocysteine incorporation"/>
    <property type="evidence" value="ECO:0007669"/>
    <property type="project" value="UniProtKB-UniRule"/>
</dbReference>
<dbReference type="Gene3D" id="3.90.1150.180">
    <property type="match status" value="1"/>
</dbReference>
<dbReference type="Gene3D" id="3.40.640.10">
    <property type="entry name" value="Type I PLP-dependent aspartate aminotransferase-like (Major domain)"/>
    <property type="match status" value="1"/>
</dbReference>
<dbReference type="HAMAP" id="MF_00423">
    <property type="entry name" value="SelA"/>
    <property type="match status" value="1"/>
</dbReference>
<dbReference type="InterPro" id="IPR015424">
    <property type="entry name" value="PyrdxlP-dep_Trfase"/>
</dbReference>
<dbReference type="InterPro" id="IPR015421">
    <property type="entry name" value="PyrdxlP-dep_Trfase_major"/>
</dbReference>
<dbReference type="InterPro" id="IPR018319">
    <property type="entry name" value="SelA-like"/>
</dbReference>
<dbReference type="InterPro" id="IPR004534">
    <property type="entry name" value="SelA_trans"/>
</dbReference>
<dbReference type="NCBIfam" id="TIGR00474">
    <property type="entry name" value="selA"/>
    <property type="match status" value="1"/>
</dbReference>
<dbReference type="PANTHER" id="PTHR32328">
    <property type="entry name" value="L-SERYL-TRNA(SEC) SELENIUM TRANSFERASE"/>
    <property type="match status" value="1"/>
</dbReference>
<dbReference type="PANTHER" id="PTHR32328:SF0">
    <property type="entry name" value="L-SERYL-TRNA(SEC) SELENIUM TRANSFERASE"/>
    <property type="match status" value="1"/>
</dbReference>
<dbReference type="Pfam" id="PF03841">
    <property type="entry name" value="SelA"/>
    <property type="match status" value="1"/>
</dbReference>
<dbReference type="SUPFAM" id="SSF53383">
    <property type="entry name" value="PLP-dependent transferases"/>
    <property type="match status" value="1"/>
</dbReference>
<proteinExistence type="inferred from homology"/>
<reference key="1">
    <citation type="submission" date="2006-12" db="EMBL/GenBank/DDBJ databases">
        <authorList>
            <person name="Fouts D.E."/>
            <person name="Nelson K.E."/>
            <person name="Sebastian Y."/>
        </authorList>
    </citation>
    <scope>NUCLEOTIDE SEQUENCE [LARGE SCALE GENOMIC DNA]</scope>
    <source>
        <strain>81-176</strain>
    </source>
</reference>
<protein>
    <recommendedName>
        <fullName evidence="1">L-seryl-tRNA(Sec) selenium transferase</fullName>
        <ecNumber evidence="1">2.9.1.1</ecNumber>
    </recommendedName>
    <alternativeName>
        <fullName evidence="1">Selenocysteine synthase</fullName>
        <shortName evidence="1">Sec synthase</shortName>
    </alternativeName>
    <alternativeName>
        <fullName evidence="1">Selenocysteinyl-tRNA(Sec) synthase</fullName>
    </alternativeName>
</protein>
<name>SELA_CAMJJ</name>
<organism>
    <name type="scientific">Campylobacter jejuni subsp. jejuni serotype O:23/36 (strain 81-176)</name>
    <dbReference type="NCBI Taxonomy" id="354242"/>
    <lineage>
        <taxon>Bacteria</taxon>
        <taxon>Pseudomonadati</taxon>
        <taxon>Campylobacterota</taxon>
        <taxon>Epsilonproteobacteria</taxon>
        <taxon>Campylobacterales</taxon>
        <taxon>Campylobacteraceae</taxon>
        <taxon>Campylobacter</taxon>
    </lineage>
</organism>
<comment type="function">
    <text evidence="1">Converts seryl-tRNA(Sec) to selenocysteinyl-tRNA(Sec) required for selenoprotein biosynthesis.</text>
</comment>
<comment type="catalytic activity">
    <reaction evidence="1">
        <text>L-seryl-tRNA(Sec) + selenophosphate + H(+) = L-selenocysteinyl-tRNA(Sec) + phosphate</text>
        <dbReference type="Rhea" id="RHEA:22728"/>
        <dbReference type="Rhea" id="RHEA-COMP:9742"/>
        <dbReference type="Rhea" id="RHEA-COMP:9743"/>
        <dbReference type="ChEBI" id="CHEBI:15378"/>
        <dbReference type="ChEBI" id="CHEBI:16144"/>
        <dbReference type="ChEBI" id="CHEBI:43474"/>
        <dbReference type="ChEBI" id="CHEBI:78533"/>
        <dbReference type="ChEBI" id="CHEBI:78573"/>
        <dbReference type="EC" id="2.9.1.1"/>
    </reaction>
</comment>
<comment type="cofactor">
    <cofactor evidence="1">
        <name>pyridoxal 5'-phosphate</name>
        <dbReference type="ChEBI" id="CHEBI:597326"/>
    </cofactor>
</comment>
<comment type="pathway">
    <text evidence="1">Aminoacyl-tRNA biosynthesis; selenocysteinyl-tRNA(Sec) biosynthesis; selenocysteinyl-tRNA(Sec) from L-seryl-tRNA(Sec) (bacterial route): step 1/1.</text>
</comment>
<comment type="subcellular location">
    <subcellularLocation>
        <location evidence="1">Cytoplasm</location>
    </subcellularLocation>
</comment>
<comment type="similarity">
    <text evidence="1">Belongs to the SelA family.</text>
</comment>
<accession>A1W0Z5</accession>
<evidence type="ECO:0000255" key="1">
    <source>
        <dbReference type="HAMAP-Rule" id="MF_00423"/>
    </source>
</evidence>
<sequence>MNKFRTFPQINTLIEDESLKSYPFYIKAFFCKKVVAKLKENFFQDEISKDKLLLEIKKEIKTFYRKDLQSVINASGVVIHTNLGRSVIHEELYEACKDIICNYSNVEFDLENGKRGSRYALVLEKLKMLFECEDALVVNNNAAAVFLVLNSLCYDKEVISSRGELVEIGGSFRVPEVIKAAGVKLCEVGTSNKTHLKDYEQAINENTALILKTHKSNFALMGFHSEVNIKDLHELAKEKELLSYYDLGSGWCENLNEKLIKNEPKIRKLVQECDILSFSGDKLFGSVQAGIILGKKELIEKLKQNQLLRMLRVDKLTLSFLNESLKAYLQKDYEKIITLKLLNDDLSFIEKKALRVQKELKFQTQLKKSKSLVGGGSMPDKSLDTYILTFQGDALKLQTRFRKENIIGRIENDEFVLDFRTIRENELQKLILTINQMENL</sequence>
<feature type="chain" id="PRO_1000050358" description="L-seryl-tRNA(Sec) selenium transferase">
    <location>
        <begin position="1"/>
        <end position="440"/>
    </location>
</feature>
<feature type="modified residue" description="N6-(pyridoxal phosphate)lysine" evidence="1">
    <location>
        <position position="282"/>
    </location>
</feature>